<accession>Q1AW68</accession>
<proteinExistence type="inferred from homology"/>
<evidence type="ECO:0000255" key="1">
    <source>
        <dbReference type="HAMAP-Rule" id="MF_00291"/>
    </source>
</evidence>
<evidence type="ECO:0000256" key="2">
    <source>
        <dbReference type="SAM" id="MobiDB-lite"/>
    </source>
</evidence>
<evidence type="ECO:0000305" key="3"/>
<dbReference type="EMBL" id="CP000386">
    <property type="protein sequence ID" value="ABG04360.1"/>
    <property type="molecule type" value="Genomic_DNA"/>
</dbReference>
<dbReference type="RefSeq" id="WP_011564377.1">
    <property type="nucleotide sequence ID" value="NC_008148.1"/>
</dbReference>
<dbReference type="SMR" id="Q1AW68"/>
<dbReference type="STRING" id="266117.Rxyl_1398"/>
<dbReference type="KEGG" id="rxy:Rxyl_1398"/>
<dbReference type="eggNOG" id="COG0052">
    <property type="taxonomic scope" value="Bacteria"/>
</dbReference>
<dbReference type="HOGENOM" id="CLU_040318_1_2_11"/>
<dbReference type="OrthoDB" id="9808036at2"/>
<dbReference type="PhylomeDB" id="Q1AW68"/>
<dbReference type="Proteomes" id="UP000006637">
    <property type="component" value="Chromosome"/>
</dbReference>
<dbReference type="GO" id="GO:0022627">
    <property type="term" value="C:cytosolic small ribosomal subunit"/>
    <property type="evidence" value="ECO:0007669"/>
    <property type="project" value="TreeGrafter"/>
</dbReference>
<dbReference type="GO" id="GO:0003735">
    <property type="term" value="F:structural constituent of ribosome"/>
    <property type="evidence" value="ECO:0007669"/>
    <property type="project" value="InterPro"/>
</dbReference>
<dbReference type="GO" id="GO:0006412">
    <property type="term" value="P:translation"/>
    <property type="evidence" value="ECO:0007669"/>
    <property type="project" value="UniProtKB-UniRule"/>
</dbReference>
<dbReference type="CDD" id="cd01425">
    <property type="entry name" value="RPS2"/>
    <property type="match status" value="1"/>
</dbReference>
<dbReference type="Gene3D" id="3.40.50.10490">
    <property type="entry name" value="Glucose-6-phosphate isomerase like protein, domain 1"/>
    <property type="match status" value="1"/>
</dbReference>
<dbReference type="Gene3D" id="1.10.287.610">
    <property type="entry name" value="Helix hairpin bin"/>
    <property type="match status" value="1"/>
</dbReference>
<dbReference type="HAMAP" id="MF_00291_B">
    <property type="entry name" value="Ribosomal_uS2_B"/>
    <property type="match status" value="1"/>
</dbReference>
<dbReference type="InterPro" id="IPR001865">
    <property type="entry name" value="Ribosomal_uS2"/>
</dbReference>
<dbReference type="InterPro" id="IPR005706">
    <property type="entry name" value="Ribosomal_uS2_bac/mit/plastid"/>
</dbReference>
<dbReference type="InterPro" id="IPR018130">
    <property type="entry name" value="Ribosomal_uS2_CS"/>
</dbReference>
<dbReference type="InterPro" id="IPR023591">
    <property type="entry name" value="Ribosomal_uS2_flav_dom_sf"/>
</dbReference>
<dbReference type="NCBIfam" id="TIGR01011">
    <property type="entry name" value="rpsB_bact"/>
    <property type="match status" value="1"/>
</dbReference>
<dbReference type="PANTHER" id="PTHR12534">
    <property type="entry name" value="30S RIBOSOMAL PROTEIN S2 PROKARYOTIC AND ORGANELLAR"/>
    <property type="match status" value="1"/>
</dbReference>
<dbReference type="PANTHER" id="PTHR12534:SF0">
    <property type="entry name" value="SMALL RIBOSOMAL SUBUNIT PROTEIN US2M"/>
    <property type="match status" value="1"/>
</dbReference>
<dbReference type="Pfam" id="PF00318">
    <property type="entry name" value="Ribosomal_S2"/>
    <property type="match status" value="1"/>
</dbReference>
<dbReference type="PRINTS" id="PR00395">
    <property type="entry name" value="RIBOSOMALS2"/>
</dbReference>
<dbReference type="SUPFAM" id="SSF52313">
    <property type="entry name" value="Ribosomal protein S2"/>
    <property type="match status" value="1"/>
</dbReference>
<dbReference type="PROSITE" id="PS00962">
    <property type="entry name" value="RIBOSOMAL_S2_1"/>
    <property type="match status" value="1"/>
</dbReference>
<protein>
    <recommendedName>
        <fullName evidence="1">Small ribosomal subunit protein uS2</fullName>
    </recommendedName>
    <alternativeName>
        <fullName evidence="3">30S ribosomal protein S2</fullName>
    </alternativeName>
</protein>
<feature type="chain" id="PRO_0000352033" description="Small ribosomal subunit protein uS2">
    <location>
        <begin position="1"/>
        <end position="306"/>
    </location>
</feature>
<feature type="region of interest" description="Disordered" evidence="2">
    <location>
        <begin position="229"/>
        <end position="306"/>
    </location>
</feature>
<feature type="compositionally biased region" description="Basic and acidic residues" evidence="2">
    <location>
        <begin position="229"/>
        <end position="238"/>
    </location>
</feature>
<feature type="compositionally biased region" description="Acidic residues" evidence="2">
    <location>
        <begin position="261"/>
        <end position="287"/>
    </location>
</feature>
<name>RS2_RUBXD</name>
<gene>
    <name evidence="1" type="primary">rpsB</name>
    <name type="ordered locus">Rxyl_1398</name>
</gene>
<sequence>MESTQSIGIRELLEAGVHFGHQAKRWNPKMKRYIFAERAGVHIIDLDQTLDLLERALNFIRGVAEAGQDVLFVGTKKQAQITIAEQAIRCGQPYVAERYIGGLLTNFRTIRPRIEYFKQLSREVEETPEEERSGKEWFARLREYQKLRRNFAGITEMERLPGAVYVVDPKREELLVREANRLRIPVVALTDTNCDPDVIDYVIPGNDDAIRSISLITRLIADAVIEGRGEESAAEERPVPPAVEEAQMVEEGRVPAGGEEQPGEPEAEAFEEAAGEPEDSTEEEAAEEQAASQAAPVGEGDESEER</sequence>
<reference key="1">
    <citation type="submission" date="2006-06" db="EMBL/GenBank/DDBJ databases">
        <title>Complete sequence of Rubrobacter xylanophilus DSM 9941.</title>
        <authorList>
            <consortium name="US DOE Joint Genome Institute"/>
            <person name="Copeland A."/>
            <person name="Lucas S."/>
            <person name="Lapidus A."/>
            <person name="Barry K."/>
            <person name="Detter J.C."/>
            <person name="Glavina del Rio T."/>
            <person name="Hammon N."/>
            <person name="Israni S."/>
            <person name="Dalin E."/>
            <person name="Tice H."/>
            <person name="Pitluck S."/>
            <person name="Munk A.C."/>
            <person name="Brettin T."/>
            <person name="Bruce D."/>
            <person name="Han C."/>
            <person name="Tapia R."/>
            <person name="Gilna P."/>
            <person name="Schmutz J."/>
            <person name="Larimer F."/>
            <person name="Land M."/>
            <person name="Hauser L."/>
            <person name="Kyrpides N."/>
            <person name="Lykidis A."/>
            <person name="da Costa M.S."/>
            <person name="Rainey F.A."/>
            <person name="Empadinhas N."/>
            <person name="Jolivet E."/>
            <person name="Battista J.R."/>
            <person name="Richardson P."/>
        </authorList>
    </citation>
    <scope>NUCLEOTIDE SEQUENCE [LARGE SCALE GENOMIC DNA]</scope>
    <source>
        <strain>DSM 9941 / JCM 11954 / NBRC 16129 / PRD-1</strain>
    </source>
</reference>
<keyword id="KW-1185">Reference proteome</keyword>
<keyword id="KW-0687">Ribonucleoprotein</keyword>
<keyword id="KW-0689">Ribosomal protein</keyword>
<comment type="similarity">
    <text evidence="1">Belongs to the universal ribosomal protein uS2 family.</text>
</comment>
<organism>
    <name type="scientific">Rubrobacter xylanophilus (strain DSM 9941 / JCM 11954 / NBRC 16129 / PRD-1)</name>
    <dbReference type="NCBI Taxonomy" id="266117"/>
    <lineage>
        <taxon>Bacteria</taxon>
        <taxon>Bacillati</taxon>
        <taxon>Actinomycetota</taxon>
        <taxon>Rubrobacteria</taxon>
        <taxon>Rubrobacterales</taxon>
        <taxon>Rubrobacteraceae</taxon>
        <taxon>Rubrobacter</taxon>
    </lineage>
</organism>